<reference key="1">
    <citation type="journal article" date="2002" name="Nature">
        <title>The genome sequence of Schizosaccharomyces pombe.</title>
        <authorList>
            <person name="Wood V."/>
            <person name="Gwilliam R."/>
            <person name="Rajandream M.A."/>
            <person name="Lyne M.H."/>
            <person name="Lyne R."/>
            <person name="Stewart A."/>
            <person name="Sgouros J.G."/>
            <person name="Peat N."/>
            <person name="Hayles J."/>
            <person name="Baker S.G."/>
            <person name="Basham D."/>
            <person name="Bowman S."/>
            <person name="Brooks K."/>
            <person name="Brown D."/>
            <person name="Brown S."/>
            <person name="Chillingworth T."/>
            <person name="Churcher C.M."/>
            <person name="Collins M."/>
            <person name="Connor R."/>
            <person name="Cronin A."/>
            <person name="Davis P."/>
            <person name="Feltwell T."/>
            <person name="Fraser A."/>
            <person name="Gentles S."/>
            <person name="Goble A."/>
            <person name="Hamlin N."/>
            <person name="Harris D.E."/>
            <person name="Hidalgo J."/>
            <person name="Hodgson G."/>
            <person name="Holroyd S."/>
            <person name="Hornsby T."/>
            <person name="Howarth S."/>
            <person name="Huckle E.J."/>
            <person name="Hunt S."/>
            <person name="Jagels K."/>
            <person name="James K.D."/>
            <person name="Jones L."/>
            <person name="Jones M."/>
            <person name="Leather S."/>
            <person name="McDonald S."/>
            <person name="McLean J."/>
            <person name="Mooney P."/>
            <person name="Moule S."/>
            <person name="Mungall K.L."/>
            <person name="Murphy L.D."/>
            <person name="Niblett D."/>
            <person name="Odell C."/>
            <person name="Oliver K."/>
            <person name="O'Neil S."/>
            <person name="Pearson D."/>
            <person name="Quail M.A."/>
            <person name="Rabbinowitsch E."/>
            <person name="Rutherford K.M."/>
            <person name="Rutter S."/>
            <person name="Saunders D."/>
            <person name="Seeger K."/>
            <person name="Sharp S."/>
            <person name="Skelton J."/>
            <person name="Simmonds M.N."/>
            <person name="Squares R."/>
            <person name="Squares S."/>
            <person name="Stevens K."/>
            <person name="Taylor K."/>
            <person name="Taylor R.G."/>
            <person name="Tivey A."/>
            <person name="Walsh S.V."/>
            <person name="Warren T."/>
            <person name="Whitehead S."/>
            <person name="Woodward J.R."/>
            <person name="Volckaert G."/>
            <person name="Aert R."/>
            <person name="Robben J."/>
            <person name="Grymonprez B."/>
            <person name="Weltjens I."/>
            <person name="Vanstreels E."/>
            <person name="Rieger M."/>
            <person name="Schaefer M."/>
            <person name="Mueller-Auer S."/>
            <person name="Gabel C."/>
            <person name="Fuchs M."/>
            <person name="Duesterhoeft A."/>
            <person name="Fritzc C."/>
            <person name="Holzer E."/>
            <person name="Moestl D."/>
            <person name="Hilbert H."/>
            <person name="Borzym K."/>
            <person name="Langer I."/>
            <person name="Beck A."/>
            <person name="Lehrach H."/>
            <person name="Reinhardt R."/>
            <person name="Pohl T.M."/>
            <person name="Eger P."/>
            <person name="Zimmermann W."/>
            <person name="Wedler H."/>
            <person name="Wambutt R."/>
            <person name="Purnelle B."/>
            <person name="Goffeau A."/>
            <person name="Cadieu E."/>
            <person name="Dreano S."/>
            <person name="Gloux S."/>
            <person name="Lelaure V."/>
            <person name="Mottier S."/>
            <person name="Galibert F."/>
            <person name="Aves S.J."/>
            <person name="Xiang Z."/>
            <person name="Hunt C."/>
            <person name="Moore K."/>
            <person name="Hurst S.M."/>
            <person name="Lucas M."/>
            <person name="Rochet M."/>
            <person name="Gaillardin C."/>
            <person name="Tallada V.A."/>
            <person name="Garzon A."/>
            <person name="Thode G."/>
            <person name="Daga R.R."/>
            <person name="Cruzado L."/>
            <person name="Jimenez J."/>
            <person name="Sanchez M."/>
            <person name="del Rey F."/>
            <person name="Benito J."/>
            <person name="Dominguez A."/>
            <person name="Revuelta J.L."/>
            <person name="Moreno S."/>
            <person name="Armstrong J."/>
            <person name="Forsburg S.L."/>
            <person name="Cerutti L."/>
            <person name="Lowe T."/>
            <person name="McCombie W.R."/>
            <person name="Paulsen I."/>
            <person name="Potashkin J."/>
            <person name="Shpakovski G.V."/>
            <person name="Ussery D."/>
            <person name="Barrell B.G."/>
            <person name="Nurse P."/>
        </authorList>
    </citation>
    <scope>NUCLEOTIDE SEQUENCE [LARGE SCALE GENOMIC DNA]</scope>
    <source>
        <strain>972 / ATCC 24843</strain>
    </source>
</reference>
<reference key="2">
    <citation type="journal article" date="2006" name="Nat. Biotechnol.">
        <title>ORFeome cloning and global analysis of protein localization in the fission yeast Schizosaccharomyces pombe.</title>
        <authorList>
            <person name="Matsuyama A."/>
            <person name="Arai R."/>
            <person name="Yashiroda Y."/>
            <person name="Shirai A."/>
            <person name="Kamata A."/>
            <person name="Sekido S."/>
            <person name="Kobayashi Y."/>
            <person name="Hashimoto A."/>
            <person name="Hamamoto M."/>
            <person name="Hiraoka Y."/>
            <person name="Horinouchi S."/>
            <person name="Yoshida M."/>
        </authorList>
    </citation>
    <scope>SUBCELLULAR LOCATION [LARGE SCALE ANALYSIS]</scope>
</reference>
<organism>
    <name type="scientific">Schizosaccharomyces pombe (strain 972 / ATCC 24843)</name>
    <name type="common">Fission yeast</name>
    <dbReference type="NCBI Taxonomy" id="284812"/>
    <lineage>
        <taxon>Eukaryota</taxon>
        <taxon>Fungi</taxon>
        <taxon>Dikarya</taxon>
        <taxon>Ascomycota</taxon>
        <taxon>Taphrinomycotina</taxon>
        <taxon>Schizosaccharomycetes</taxon>
        <taxon>Schizosaccharomycetales</taxon>
        <taxon>Schizosaccharomycetaceae</taxon>
        <taxon>Schizosaccharomyces</taxon>
    </lineage>
</organism>
<evidence type="ECO:0000256" key="1">
    <source>
        <dbReference type="SAM" id="MobiDB-lite"/>
    </source>
</evidence>
<evidence type="ECO:0000269" key="2">
    <source>
    </source>
</evidence>
<evidence type="ECO:0000305" key="3"/>
<keyword id="KW-0539">Nucleus</keyword>
<keyword id="KW-1185">Reference proteome</keyword>
<comment type="subcellular location">
    <subcellularLocation>
        <location evidence="2">Nucleus</location>
        <location evidence="2">Nucleolus</location>
    </subcellularLocation>
</comment>
<comment type="similarity">
    <text evidence="3">Belongs to the ALB1 family.</text>
</comment>
<dbReference type="EMBL" id="CU329671">
    <property type="protein sequence ID" value="CAA21177.1"/>
    <property type="molecule type" value="Genomic_DNA"/>
</dbReference>
<dbReference type="PIR" id="T40122">
    <property type="entry name" value="T40122"/>
</dbReference>
<dbReference type="BioGRID" id="276949">
    <property type="interactions" value="8"/>
</dbReference>
<dbReference type="STRING" id="284812.O74809"/>
<dbReference type="iPTMnet" id="O74809"/>
<dbReference type="PaxDb" id="4896-SPBC2D10.19c.1"/>
<dbReference type="EnsemblFungi" id="SPBC2D10.19c.1">
    <property type="protein sequence ID" value="SPBC2D10.19c.1:pep"/>
    <property type="gene ID" value="SPBC2D10.19c"/>
</dbReference>
<dbReference type="KEGG" id="spo:2540421"/>
<dbReference type="PomBase" id="SPBC2D10.19c"/>
<dbReference type="VEuPathDB" id="FungiDB:SPBC2D10.19c"/>
<dbReference type="HOGENOM" id="CLU_2238181_0_0_1"/>
<dbReference type="InParanoid" id="O74809"/>
<dbReference type="OMA" id="NFMSVDQ"/>
<dbReference type="PRO" id="PR:O74809"/>
<dbReference type="Proteomes" id="UP000002485">
    <property type="component" value="Chromosome II"/>
</dbReference>
<dbReference type="GO" id="GO:0005730">
    <property type="term" value="C:nucleolus"/>
    <property type="evidence" value="ECO:0007005"/>
    <property type="project" value="PomBase"/>
</dbReference>
<dbReference type="GO" id="GO:0005634">
    <property type="term" value="C:nucleus"/>
    <property type="evidence" value="ECO:0007005"/>
    <property type="project" value="PomBase"/>
</dbReference>
<dbReference type="GO" id="GO:0042273">
    <property type="term" value="P:ribosomal large subunit biogenesis"/>
    <property type="evidence" value="ECO:0000266"/>
    <property type="project" value="PomBase"/>
</dbReference>
<protein>
    <recommendedName>
        <fullName>Uncharacterized protein C2D10.19c</fullName>
    </recommendedName>
</protein>
<sequence length="105" mass="11638">MPHRNDRRKSASKAPNAIIHGRVASKKTIKKQLRNGKYSLKRLAEKGIHLDDIAMEIDNASKKNISKDKSLNENLFGKTEAGKQKDFMNIEPTCKGTILGAPPAL</sequence>
<gene>
    <name type="ORF">SPBC2D10.19c</name>
</gene>
<feature type="chain" id="PRO_0000304055" description="Uncharacterized protein C2D10.19c">
    <location>
        <begin position="1"/>
        <end position="105"/>
    </location>
</feature>
<feature type="region of interest" description="Disordered" evidence="1">
    <location>
        <begin position="1"/>
        <end position="20"/>
    </location>
</feature>
<feature type="compositionally biased region" description="Basic residues" evidence="1">
    <location>
        <begin position="1"/>
        <end position="11"/>
    </location>
</feature>
<accession>O74809</accession>
<proteinExistence type="inferred from homology"/>
<name>YGNJ_SCHPO</name>